<sequence>WLSGVDKIRGVNLGSAFIIE</sequence>
<comment type="function">
    <text evidence="2">Endo-1,6-beta-glucanase that has highest activity against the beta-1,6-glucan pustulan. Also active against the beta-1,6-glucan lutean. Lower activity against laminarin (beta-1,3-glucan with beta-1,6-branches). Little or no activity against gentiobiose, yeast glucan, lichenin, scleroglucan, curdlan, barley glucan, CM cellulose, HE cellulose, pachyman and pullulan.</text>
</comment>
<comment type="catalytic activity">
    <reaction evidence="2">
        <text>Random hydrolysis of (1-&gt;6)-linkages in (1-&gt;6)-beta-D-glucans.</text>
        <dbReference type="EC" id="3.2.1.75"/>
    </reaction>
</comment>
<comment type="biophysicochemical properties">
    <phDependence>
        <text evidence="2">Optimum pH is 6.5 at 40 degrees Celsius. Retains at least 80% of activity after incubation for 24 hours at 4 degrees Celsius between pH 4.5 and pH 9.5.</text>
    </phDependence>
    <temperatureDependence>
        <text evidence="2">Optimum temperature is 50 degrees Celsius at pH 5.0. Stable when incubated for 30 minutes at up to 50 degrees Celsius, little activity at 75 degrees Celsius or above.</text>
    </temperatureDependence>
</comment>
<comment type="subcellular location">
    <subcellularLocation>
        <location evidence="2">Secreted</location>
        <location evidence="2">Extracellular space</location>
    </subcellularLocation>
</comment>
<comment type="similarity">
    <text evidence="1">Belongs to the glycosyl hydrolase 5 (cellulase A) family.</text>
</comment>
<proteinExistence type="evidence at protein level"/>
<keyword id="KW-0961">Cell wall biogenesis/degradation</keyword>
<keyword id="KW-0903">Direct protein sequencing</keyword>
<keyword id="KW-0326">Glycosidase</keyword>
<keyword id="KW-0378">Hydrolase</keyword>
<keyword id="KW-0964">Secreted</keyword>
<accession>P82288</accession>
<feature type="chain" id="PRO_0000257975" description="Endo-1,6-beta-glucanase">
    <location>
        <begin position="1"/>
        <end position="20" status="greater than"/>
    </location>
</feature>
<feature type="non-terminal residue" evidence="3">
    <location>
        <position position="20"/>
    </location>
</feature>
<protein>
    <recommendedName>
        <fullName>Endo-1,6-beta-glucanase</fullName>
        <ecNumber evidence="2">3.2.1.75</ecNumber>
    </recommendedName>
</protein>
<reference key="1">
    <citation type="journal article" date="2001" name="Enzyme Microb. Technol.">
        <title>Purification and proprieties of a (1,6)-beta-glucanase from Acremonium sp. strain IMI 383068.</title>
        <authorList>
            <person name="Jayus X."/>
            <person name="McDougall B.M."/>
            <person name="Seviour R.J."/>
        </authorList>
    </citation>
    <scope>PROTEIN SEQUENCE</scope>
    <scope>FUNCTION</scope>
    <scope>CATALYTIC ACTIVITY</scope>
    <scope>BIOPHYSICOCHEMICAL PROPERTIES</scope>
    <scope>SUBCELLULAR LOCATION</scope>
    <source>
        <strain evidence="2">IMI 383068</strain>
    </source>
</reference>
<dbReference type="EC" id="3.2.1.75" evidence="2"/>
<dbReference type="CAZy" id="GH5">
    <property type="family name" value="Glycoside Hydrolase Family 5"/>
</dbReference>
<dbReference type="BRENDA" id="3.2.1.75">
    <property type="organism ID" value="116"/>
</dbReference>
<dbReference type="GO" id="GO:0005576">
    <property type="term" value="C:extracellular region"/>
    <property type="evidence" value="ECO:0007669"/>
    <property type="project" value="UniProtKB-SubCell"/>
</dbReference>
<dbReference type="GO" id="GO:0046557">
    <property type="term" value="F:glucan endo-1,6-beta-glucosidase activity"/>
    <property type="evidence" value="ECO:0007669"/>
    <property type="project" value="UniProtKB-EC"/>
</dbReference>
<dbReference type="GO" id="GO:0071555">
    <property type="term" value="P:cell wall organization"/>
    <property type="evidence" value="ECO:0007669"/>
    <property type="project" value="UniProtKB-KW"/>
</dbReference>
<name>GUN1_ACRSP</name>
<organism>
    <name type="scientific">Acremonium sp</name>
    <dbReference type="NCBI Taxonomy" id="2046025"/>
    <lineage>
        <taxon>Eukaryota</taxon>
        <taxon>Fungi</taxon>
        <taxon>Dikarya</taxon>
        <taxon>Ascomycota</taxon>
        <taxon>Pezizomycotina</taxon>
        <taxon>Sordariomycetes</taxon>
        <taxon>Hypocreomycetidae</taxon>
        <taxon>Hypocreales</taxon>
        <taxon>Hypocreales incertae sedis</taxon>
        <taxon>Acremonium</taxon>
    </lineage>
</organism>
<evidence type="ECO:0000255" key="1"/>
<evidence type="ECO:0000269" key="2">
    <source ref="1"/>
</evidence>
<evidence type="ECO:0000303" key="3">
    <source ref="1"/>
</evidence>